<keyword id="KW-0210">Decarboxylase</keyword>
<keyword id="KW-0456">Lyase</keyword>
<keyword id="KW-0663">Pyridoxal phosphate</keyword>
<keyword id="KW-1185">Reference proteome</keyword>
<comment type="cofactor">
    <cofactor evidence="1">
        <name>pyridoxal 5'-phosphate</name>
        <dbReference type="ChEBI" id="CHEBI:597326"/>
    </cofactor>
</comment>
<comment type="similarity">
    <text evidence="2">Belongs to the Orn/Lys/Arg decarboxylase class-I family.</text>
</comment>
<name>YAAO_BACSU</name>
<feature type="chain" id="PRO_0000201148" description="Uncharacterized protein YaaO">
    <location>
        <begin position="1"/>
        <end position="480"/>
    </location>
</feature>
<feature type="modified residue" description="N6-(pyridoxal phosphate)lysine" evidence="1">
    <location>
        <position position="222"/>
    </location>
</feature>
<protein>
    <recommendedName>
        <fullName>Uncharacterized protein YaaO</fullName>
    </recommendedName>
</protein>
<accession>P37536</accession>
<dbReference type="EMBL" id="D26185">
    <property type="protein sequence ID" value="BAA05263.1"/>
    <property type="molecule type" value="Genomic_DNA"/>
</dbReference>
<dbReference type="EMBL" id="AL009126">
    <property type="protein sequence ID" value="CAB11803.1"/>
    <property type="molecule type" value="Genomic_DNA"/>
</dbReference>
<dbReference type="PIR" id="S66057">
    <property type="entry name" value="S66057"/>
</dbReference>
<dbReference type="RefSeq" id="NP_387908.1">
    <property type="nucleotide sequence ID" value="NC_000964.3"/>
</dbReference>
<dbReference type="RefSeq" id="WP_003243352.1">
    <property type="nucleotide sequence ID" value="NZ_OZ025638.1"/>
</dbReference>
<dbReference type="SMR" id="P37536"/>
<dbReference type="FunCoup" id="P37536">
    <property type="interactions" value="46"/>
</dbReference>
<dbReference type="STRING" id="224308.BSU00270"/>
<dbReference type="PaxDb" id="224308-BSU00270"/>
<dbReference type="DNASU" id="937013"/>
<dbReference type="EnsemblBacteria" id="CAB11803">
    <property type="protein sequence ID" value="CAB11803"/>
    <property type="gene ID" value="BSU_00270"/>
</dbReference>
<dbReference type="GeneID" id="937013"/>
<dbReference type="KEGG" id="bsu:BSU00270"/>
<dbReference type="PATRIC" id="fig|224308.179.peg.27"/>
<dbReference type="eggNOG" id="COG1982">
    <property type="taxonomic scope" value="Bacteria"/>
</dbReference>
<dbReference type="InParanoid" id="P37536"/>
<dbReference type="OrthoDB" id="9815233at2"/>
<dbReference type="PhylomeDB" id="P37536"/>
<dbReference type="BioCyc" id="BSUB:BSU00270-MONOMER"/>
<dbReference type="Proteomes" id="UP000001570">
    <property type="component" value="Chromosome"/>
</dbReference>
<dbReference type="GO" id="GO:0016831">
    <property type="term" value="F:carboxy-lyase activity"/>
    <property type="evidence" value="ECO:0007669"/>
    <property type="project" value="UniProtKB-KW"/>
</dbReference>
<dbReference type="CDD" id="cd00615">
    <property type="entry name" value="Orn_deC_like"/>
    <property type="match status" value="1"/>
</dbReference>
<dbReference type="Gene3D" id="3.90.105.10">
    <property type="entry name" value="Molybdopterin biosynthesis moea protein, domain 2"/>
    <property type="match status" value="1"/>
</dbReference>
<dbReference type="Gene3D" id="3.40.640.10">
    <property type="entry name" value="Type I PLP-dependent aspartate aminotransferase-like (Major domain)"/>
    <property type="match status" value="1"/>
</dbReference>
<dbReference type="InterPro" id="IPR000310">
    <property type="entry name" value="Orn/Lys/Arg_deCO2ase_major_dom"/>
</dbReference>
<dbReference type="InterPro" id="IPR052357">
    <property type="entry name" value="Orn_Lys_Arg_decarboxylase-I"/>
</dbReference>
<dbReference type="InterPro" id="IPR008286">
    <property type="entry name" value="Prn/Lys/Arg_de-COase_C"/>
</dbReference>
<dbReference type="InterPro" id="IPR036633">
    <property type="entry name" value="Prn/Lys/Arg_de-COase_C_sf"/>
</dbReference>
<dbReference type="InterPro" id="IPR015424">
    <property type="entry name" value="PyrdxlP-dep_Trfase"/>
</dbReference>
<dbReference type="InterPro" id="IPR015421">
    <property type="entry name" value="PyrdxlP-dep_Trfase_major"/>
</dbReference>
<dbReference type="PANTHER" id="PTHR43277">
    <property type="entry name" value="ARGININE DECARBOXYLASE"/>
    <property type="match status" value="1"/>
</dbReference>
<dbReference type="PANTHER" id="PTHR43277:SF3">
    <property type="entry name" value="DECARBOXYLASE, PUTATIVE-RELATED"/>
    <property type="match status" value="1"/>
</dbReference>
<dbReference type="Pfam" id="PF01276">
    <property type="entry name" value="OKR_DC_1"/>
    <property type="match status" value="1"/>
</dbReference>
<dbReference type="Pfam" id="PF03711">
    <property type="entry name" value="OKR_DC_1_C"/>
    <property type="match status" value="1"/>
</dbReference>
<dbReference type="SUPFAM" id="SSF55904">
    <property type="entry name" value="Ornithine decarboxylase C-terminal domain"/>
    <property type="match status" value="1"/>
</dbReference>
<dbReference type="SUPFAM" id="SSF53383">
    <property type="entry name" value="PLP-dependent transferases"/>
    <property type="match status" value="1"/>
</dbReference>
<gene>
    <name type="primary">yaaO</name>
    <name type="ordered locus">BSU00270</name>
</gene>
<proteinExistence type="inferred from homology"/>
<organism>
    <name type="scientific">Bacillus subtilis (strain 168)</name>
    <dbReference type="NCBI Taxonomy" id="224308"/>
    <lineage>
        <taxon>Bacteria</taxon>
        <taxon>Bacillati</taxon>
        <taxon>Bacillota</taxon>
        <taxon>Bacilli</taxon>
        <taxon>Bacillales</taxon>
        <taxon>Bacillaceae</taxon>
        <taxon>Bacillus</taxon>
    </lineage>
</organism>
<evidence type="ECO:0000250" key="1"/>
<evidence type="ECO:0000305" key="2"/>
<sequence>MNTPLYKALIQHARRNSHSFHVPGHHNGDVFFDDAKSIFDPLLTIDVTELAGLDDLHHPSGVIKEAQELASQLYGSAESFFLVNGTTVGNLAMILSVCEPGDTILVQRNCHKSVFHAVDLSGAEPVYLAPDVDSAMHVPTHVPLGTIKEALEAYPDAKGLVLTNPTYYGHSADLTEIITEAHHYGIPVLVDEAHGAHFILGEPFPVSALKMGADIVVQSAHKTLPAMTMGSYLHLNSSCRINRDRVAEYLNRLQSSSPSYPIMASLDIARAYVQHIIEEQKLSDILQRIETLKQTFDSLTNAEAVNPANPLIITDPLKLTIRSKRGHSGYTLQSILERANIFTELADENQVLLVLPLGGKRRINAEIIRSIDEEIEKTPPDQTFVSAEWGVQPVTVLPYPKKVLHSFKKEYVSFEEAAGRLNAEDIIPYPPGIPMIMAGERITKESVQKLSRLISMKTHVQGNMKIKEKQLLVYIEEEKS</sequence>
<reference key="1">
    <citation type="journal article" date="1994" name="DNA Res.">
        <title>Systematic sequencing of the 180 kilobase region of the Bacillus subtilis chromosome containing the replication origin.</title>
        <authorList>
            <person name="Ogasawara N."/>
            <person name="Nakai S."/>
            <person name="Yoshikawa H."/>
        </authorList>
    </citation>
    <scope>NUCLEOTIDE SEQUENCE [GENOMIC DNA]</scope>
    <source>
        <strain>168</strain>
    </source>
</reference>
<reference key="2">
    <citation type="journal article" date="1997" name="Nature">
        <title>The complete genome sequence of the Gram-positive bacterium Bacillus subtilis.</title>
        <authorList>
            <person name="Kunst F."/>
            <person name="Ogasawara N."/>
            <person name="Moszer I."/>
            <person name="Albertini A.M."/>
            <person name="Alloni G."/>
            <person name="Azevedo V."/>
            <person name="Bertero M.G."/>
            <person name="Bessieres P."/>
            <person name="Bolotin A."/>
            <person name="Borchert S."/>
            <person name="Borriss R."/>
            <person name="Boursier L."/>
            <person name="Brans A."/>
            <person name="Braun M."/>
            <person name="Brignell S.C."/>
            <person name="Bron S."/>
            <person name="Brouillet S."/>
            <person name="Bruschi C.V."/>
            <person name="Caldwell B."/>
            <person name="Capuano V."/>
            <person name="Carter N.M."/>
            <person name="Choi S.-K."/>
            <person name="Codani J.-J."/>
            <person name="Connerton I.F."/>
            <person name="Cummings N.J."/>
            <person name="Daniel R.A."/>
            <person name="Denizot F."/>
            <person name="Devine K.M."/>
            <person name="Duesterhoeft A."/>
            <person name="Ehrlich S.D."/>
            <person name="Emmerson P.T."/>
            <person name="Entian K.-D."/>
            <person name="Errington J."/>
            <person name="Fabret C."/>
            <person name="Ferrari E."/>
            <person name="Foulger D."/>
            <person name="Fritz C."/>
            <person name="Fujita M."/>
            <person name="Fujita Y."/>
            <person name="Fuma S."/>
            <person name="Galizzi A."/>
            <person name="Galleron N."/>
            <person name="Ghim S.-Y."/>
            <person name="Glaser P."/>
            <person name="Goffeau A."/>
            <person name="Golightly E.J."/>
            <person name="Grandi G."/>
            <person name="Guiseppi G."/>
            <person name="Guy B.J."/>
            <person name="Haga K."/>
            <person name="Haiech J."/>
            <person name="Harwood C.R."/>
            <person name="Henaut A."/>
            <person name="Hilbert H."/>
            <person name="Holsappel S."/>
            <person name="Hosono S."/>
            <person name="Hullo M.-F."/>
            <person name="Itaya M."/>
            <person name="Jones L.-M."/>
            <person name="Joris B."/>
            <person name="Karamata D."/>
            <person name="Kasahara Y."/>
            <person name="Klaerr-Blanchard M."/>
            <person name="Klein C."/>
            <person name="Kobayashi Y."/>
            <person name="Koetter P."/>
            <person name="Koningstein G."/>
            <person name="Krogh S."/>
            <person name="Kumano M."/>
            <person name="Kurita K."/>
            <person name="Lapidus A."/>
            <person name="Lardinois S."/>
            <person name="Lauber J."/>
            <person name="Lazarevic V."/>
            <person name="Lee S.-M."/>
            <person name="Levine A."/>
            <person name="Liu H."/>
            <person name="Masuda S."/>
            <person name="Mauel C."/>
            <person name="Medigue C."/>
            <person name="Medina N."/>
            <person name="Mellado R.P."/>
            <person name="Mizuno M."/>
            <person name="Moestl D."/>
            <person name="Nakai S."/>
            <person name="Noback M."/>
            <person name="Noone D."/>
            <person name="O'Reilly M."/>
            <person name="Ogawa K."/>
            <person name="Ogiwara A."/>
            <person name="Oudega B."/>
            <person name="Park S.-H."/>
            <person name="Parro V."/>
            <person name="Pohl T.M."/>
            <person name="Portetelle D."/>
            <person name="Porwollik S."/>
            <person name="Prescott A.M."/>
            <person name="Presecan E."/>
            <person name="Pujic P."/>
            <person name="Purnelle B."/>
            <person name="Rapoport G."/>
            <person name="Rey M."/>
            <person name="Reynolds S."/>
            <person name="Rieger M."/>
            <person name="Rivolta C."/>
            <person name="Rocha E."/>
            <person name="Roche B."/>
            <person name="Rose M."/>
            <person name="Sadaie Y."/>
            <person name="Sato T."/>
            <person name="Scanlan E."/>
            <person name="Schleich S."/>
            <person name="Schroeter R."/>
            <person name="Scoffone F."/>
            <person name="Sekiguchi J."/>
            <person name="Sekowska A."/>
            <person name="Seror S.J."/>
            <person name="Serror P."/>
            <person name="Shin B.-S."/>
            <person name="Soldo B."/>
            <person name="Sorokin A."/>
            <person name="Tacconi E."/>
            <person name="Takagi T."/>
            <person name="Takahashi H."/>
            <person name="Takemaru K."/>
            <person name="Takeuchi M."/>
            <person name="Tamakoshi A."/>
            <person name="Tanaka T."/>
            <person name="Terpstra P."/>
            <person name="Tognoni A."/>
            <person name="Tosato V."/>
            <person name="Uchiyama S."/>
            <person name="Vandenbol M."/>
            <person name="Vannier F."/>
            <person name="Vassarotti A."/>
            <person name="Viari A."/>
            <person name="Wambutt R."/>
            <person name="Wedler E."/>
            <person name="Wedler H."/>
            <person name="Weitzenegger T."/>
            <person name="Winters P."/>
            <person name="Wipat A."/>
            <person name="Yamamoto H."/>
            <person name="Yamane K."/>
            <person name="Yasumoto K."/>
            <person name="Yata K."/>
            <person name="Yoshida K."/>
            <person name="Yoshikawa H.-F."/>
            <person name="Zumstein E."/>
            <person name="Yoshikawa H."/>
            <person name="Danchin A."/>
        </authorList>
    </citation>
    <scope>NUCLEOTIDE SEQUENCE [LARGE SCALE GENOMIC DNA]</scope>
    <source>
        <strain>168</strain>
    </source>
</reference>